<reference key="1">
    <citation type="journal article" date="1996" name="Microbiology">
        <title>The 52 degrees-55 degrees segment of the Bacillus subtilis chromosome: a region devoted to purine uptake and metabolism, and containing the genes cotA, gabP and guaA and the pur gene cluster within a 34960 bp nucleotide sequence.</title>
        <authorList>
            <person name="Borriss R."/>
            <person name="Porwollik S."/>
            <person name="Schroeter R."/>
        </authorList>
    </citation>
    <scope>NUCLEOTIDE SEQUENCE [GENOMIC DNA]</scope>
    <source>
        <strain>168</strain>
    </source>
</reference>
<reference key="2">
    <citation type="journal article" date="1997" name="Nature">
        <title>The complete genome sequence of the Gram-positive bacterium Bacillus subtilis.</title>
        <authorList>
            <person name="Kunst F."/>
            <person name="Ogasawara N."/>
            <person name="Moszer I."/>
            <person name="Albertini A.M."/>
            <person name="Alloni G."/>
            <person name="Azevedo V."/>
            <person name="Bertero M.G."/>
            <person name="Bessieres P."/>
            <person name="Bolotin A."/>
            <person name="Borchert S."/>
            <person name="Borriss R."/>
            <person name="Boursier L."/>
            <person name="Brans A."/>
            <person name="Braun M."/>
            <person name="Brignell S.C."/>
            <person name="Bron S."/>
            <person name="Brouillet S."/>
            <person name="Bruschi C.V."/>
            <person name="Caldwell B."/>
            <person name="Capuano V."/>
            <person name="Carter N.M."/>
            <person name="Choi S.-K."/>
            <person name="Codani J.-J."/>
            <person name="Connerton I.F."/>
            <person name="Cummings N.J."/>
            <person name="Daniel R.A."/>
            <person name="Denizot F."/>
            <person name="Devine K.M."/>
            <person name="Duesterhoeft A."/>
            <person name="Ehrlich S.D."/>
            <person name="Emmerson P.T."/>
            <person name="Entian K.-D."/>
            <person name="Errington J."/>
            <person name="Fabret C."/>
            <person name="Ferrari E."/>
            <person name="Foulger D."/>
            <person name="Fritz C."/>
            <person name="Fujita M."/>
            <person name="Fujita Y."/>
            <person name="Fuma S."/>
            <person name="Galizzi A."/>
            <person name="Galleron N."/>
            <person name="Ghim S.-Y."/>
            <person name="Glaser P."/>
            <person name="Goffeau A."/>
            <person name="Golightly E.J."/>
            <person name="Grandi G."/>
            <person name="Guiseppi G."/>
            <person name="Guy B.J."/>
            <person name="Haga K."/>
            <person name="Haiech J."/>
            <person name="Harwood C.R."/>
            <person name="Henaut A."/>
            <person name="Hilbert H."/>
            <person name="Holsappel S."/>
            <person name="Hosono S."/>
            <person name="Hullo M.-F."/>
            <person name="Itaya M."/>
            <person name="Jones L.-M."/>
            <person name="Joris B."/>
            <person name="Karamata D."/>
            <person name="Kasahara Y."/>
            <person name="Klaerr-Blanchard M."/>
            <person name="Klein C."/>
            <person name="Kobayashi Y."/>
            <person name="Koetter P."/>
            <person name="Koningstein G."/>
            <person name="Krogh S."/>
            <person name="Kumano M."/>
            <person name="Kurita K."/>
            <person name="Lapidus A."/>
            <person name="Lardinois S."/>
            <person name="Lauber J."/>
            <person name="Lazarevic V."/>
            <person name="Lee S.-M."/>
            <person name="Levine A."/>
            <person name="Liu H."/>
            <person name="Masuda S."/>
            <person name="Mauel C."/>
            <person name="Medigue C."/>
            <person name="Medina N."/>
            <person name="Mellado R.P."/>
            <person name="Mizuno M."/>
            <person name="Moestl D."/>
            <person name="Nakai S."/>
            <person name="Noback M."/>
            <person name="Noone D."/>
            <person name="O'Reilly M."/>
            <person name="Ogawa K."/>
            <person name="Ogiwara A."/>
            <person name="Oudega B."/>
            <person name="Park S.-H."/>
            <person name="Parro V."/>
            <person name="Pohl T.M."/>
            <person name="Portetelle D."/>
            <person name="Porwollik S."/>
            <person name="Prescott A.M."/>
            <person name="Presecan E."/>
            <person name="Pujic P."/>
            <person name="Purnelle B."/>
            <person name="Rapoport G."/>
            <person name="Rey M."/>
            <person name="Reynolds S."/>
            <person name="Rieger M."/>
            <person name="Rivolta C."/>
            <person name="Rocha E."/>
            <person name="Roche B."/>
            <person name="Rose M."/>
            <person name="Sadaie Y."/>
            <person name="Sato T."/>
            <person name="Scanlan E."/>
            <person name="Schleich S."/>
            <person name="Schroeter R."/>
            <person name="Scoffone F."/>
            <person name="Sekiguchi J."/>
            <person name="Sekowska A."/>
            <person name="Seror S.J."/>
            <person name="Serror P."/>
            <person name="Shin B.-S."/>
            <person name="Soldo B."/>
            <person name="Sorokin A."/>
            <person name="Tacconi E."/>
            <person name="Takagi T."/>
            <person name="Takahashi H."/>
            <person name="Takemaru K."/>
            <person name="Takeuchi M."/>
            <person name="Tamakoshi A."/>
            <person name="Tanaka T."/>
            <person name="Terpstra P."/>
            <person name="Tognoni A."/>
            <person name="Tosato V."/>
            <person name="Uchiyama S."/>
            <person name="Vandenbol M."/>
            <person name="Vannier F."/>
            <person name="Vassarotti A."/>
            <person name="Viari A."/>
            <person name="Wambutt R."/>
            <person name="Wedler E."/>
            <person name="Wedler H."/>
            <person name="Weitzenegger T."/>
            <person name="Winters P."/>
            <person name="Wipat A."/>
            <person name="Yamamoto H."/>
            <person name="Yamane K."/>
            <person name="Yasumoto K."/>
            <person name="Yata K."/>
            <person name="Yoshida K."/>
            <person name="Yoshikawa H.-F."/>
            <person name="Zumstein E."/>
            <person name="Yoshikawa H."/>
            <person name="Danchin A."/>
        </authorList>
    </citation>
    <scope>NUCLEOTIDE SEQUENCE [LARGE SCALE GENOMIC DNA]</scope>
    <source>
        <strain>168</strain>
    </source>
</reference>
<reference key="3">
    <citation type="journal article" date="2009" name="Microbiology">
        <title>From a consortium sequence to a unified sequence: the Bacillus subtilis 168 reference genome a decade later.</title>
        <authorList>
            <person name="Barbe V."/>
            <person name="Cruveiller S."/>
            <person name="Kunst F."/>
            <person name="Lenoble P."/>
            <person name="Meurice G."/>
            <person name="Sekowska A."/>
            <person name="Vallenet D."/>
            <person name="Wang T."/>
            <person name="Moszer I."/>
            <person name="Medigue C."/>
            <person name="Danchin A."/>
        </authorList>
    </citation>
    <scope>SEQUENCE REVISION TO 6-15</scope>
</reference>
<proteinExistence type="inferred from homology"/>
<protein>
    <recommendedName>
        <fullName>Uncharacterized protein YeaC</fullName>
    </recommendedName>
</protein>
<accession>P94474</accession>
<accession>Q797B7</accession>
<organism>
    <name type="scientific">Bacillus subtilis (strain 168)</name>
    <dbReference type="NCBI Taxonomy" id="224308"/>
    <lineage>
        <taxon>Bacteria</taxon>
        <taxon>Bacillati</taxon>
        <taxon>Bacillota</taxon>
        <taxon>Bacilli</taxon>
        <taxon>Bacillales</taxon>
        <taxon>Bacillaceae</taxon>
        <taxon>Bacillus</taxon>
    </lineage>
</organism>
<gene>
    <name type="primary">yeaC</name>
    <name type="ordered locus">BSU06330</name>
</gene>
<feature type="chain" id="PRO_0000360217" description="Uncharacterized protein YeaC">
    <location>
        <begin position="1"/>
        <end position="320"/>
    </location>
</feature>
<feature type="binding site" evidence="1">
    <location>
        <begin position="46"/>
        <end position="53"/>
    </location>
    <ligand>
        <name>ATP</name>
        <dbReference type="ChEBI" id="CHEBI:30616"/>
    </ligand>
</feature>
<feature type="sequence conflict" description="In Ref. 1; AAB62308." evidence="2" ref="1">
    <original>DLHPLLGKAV</original>
    <variation>RPASFAGESS</variation>
    <location>
        <begin position="6"/>
        <end position="15"/>
    </location>
</feature>
<name>YEAC_BACSU</name>
<keyword id="KW-0067">ATP-binding</keyword>
<keyword id="KW-0547">Nucleotide-binding</keyword>
<keyword id="KW-1185">Reference proteome</keyword>
<sequence>MAYQEDLHPLLGKAVEHINRVMVGKRDIAILSLAALLAKGHVLLEDVPGVGKTMMVRALAKSIGADFKRIQFTPDLLPSDVTGVSIYNAKTMEFEYRPGPIMGNIVLADEINRTSPKTQSALLEAMEEGSVTVDGHTMQLADPFFVMATQNPVEYEGTYPLPEAQLDRFLFKLRMGYPSFNEELDVLSLQEKSHPIETLEPVIAKEDFIFLQREVQNVRADDSIKEYIVEIVQKTRQHPSVQLGVSPRGSIALMKAAQAYALLHHRDYVIPDDIQYLAPFTLPHRMMLHPEAKFEGIQAEAIVREIMSAVKVPVQRSAVR</sequence>
<comment type="similarity">
    <text evidence="2">Belongs to the MoxR family.</text>
</comment>
<evidence type="ECO:0000255" key="1"/>
<evidence type="ECO:0000305" key="2"/>
<dbReference type="EMBL" id="U51115">
    <property type="protein sequence ID" value="AAB62308.1"/>
    <property type="molecule type" value="Genomic_DNA"/>
</dbReference>
<dbReference type="EMBL" id="AL009126">
    <property type="protein sequence ID" value="CAB12452.2"/>
    <property type="molecule type" value="Genomic_DNA"/>
</dbReference>
<dbReference type="PIR" id="C69791">
    <property type="entry name" value="C69791"/>
</dbReference>
<dbReference type="RefSeq" id="NP_388514.2">
    <property type="nucleotide sequence ID" value="NC_000964.3"/>
</dbReference>
<dbReference type="RefSeq" id="WP_003242543.1">
    <property type="nucleotide sequence ID" value="NZ_OZ025638.1"/>
</dbReference>
<dbReference type="SMR" id="P94474"/>
<dbReference type="FunCoup" id="P94474">
    <property type="interactions" value="578"/>
</dbReference>
<dbReference type="STRING" id="224308.BSU06330"/>
<dbReference type="PaxDb" id="224308-BSU06330"/>
<dbReference type="EnsemblBacteria" id="CAB12452">
    <property type="protein sequence ID" value="CAB12452"/>
    <property type="gene ID" value="BSU_06330"/>
</dbReference>
<dbReference type="GeneID" id="939484"/>
<dbReference type="KEGG" id="bsu:BSU06330"/>
<dbReference type="PATRIC" id="fig|224308.179.peg.687"/>
<dbReference type="eggNOG" id="COG0714">
    <property type="taxonomic scope" value="Bacteria"/>
</dbReference>
<dbReference type="InParanoid" id="P94474"/>
<dbReference type="OrthoDB" id="9808397at2"/>
<dbReference type="PhylomeDB" id="P94474"/>
<dbReference type="BioCyc" id="BSUB:BSU06330-MONOMER"/>
<dbReference type="Proteomes" id="UP000001570">
    <property type="component" value="Chromosome"/>
</dbReference>
<dbReference type="GO" id="GO:0005524">
    <property type="term" value="F:ATP binding"/>
    <property type="evidence" value="ECO:0007669"/>
    <property type="project" value="UniProtKB-KW"/>
</dbReference>
<dbReference type="GO" id="GO:0016887">
    <property type="term" value="F:ATP hydrolysis activity"/>
    <property type="evidence" value="ECO:0007669"/>
    <property type="project" value="InterPro"/>
</dbReference>
<dbReference type="CDD" id="cd00009">
    <property type="entry name" value="AAA"/>
    <property type="match status" value="1"/>
</dbReference>
<dbReference type="FunFam" id="3.40.50.300:FF:000640">
    <property type="entry name" value="MoxR family ATPase"/>
    <property type="match status" value="1"/>
</dbReference>
<dbReference type="Gene3D" id="1.10.8.80">
    <property type="entry name" value="Magnesium chelatase subunit I, C-Terminal domain"/>
    <property type="match status" value="1"/>
</dbReference>
<dbReference type="Gene3D" id="3.40.50.300">
    <property type="entry name" value="P-loop containing nucleotide triphosphate hydrolases"/>
    <property type="match status" value="1"/>
</dbReference>
<dbReference type="InterPro" id="IPR011703">
    <property type="entry name" value="ATPase_AAA-3"/>
</dbReference>
<dbReference type="InterPro" id="IPR050764">
    <property type="entry name" value="CbbQ/NirQ/NorQ/GpvN"/>
</dbReference>
<dbReference type="InterPro" id="IPR041628">
    <property type="entry name" value="ChlI/MoxR_AAA_lid"/>
</dbReference>
<dbReference type="InterPro" id="IPR027417">
    <property type="entry name" value="P-loop_NTPase"/>
</dbReference>
<dbReference type="PANTHER" id="PTHR42759:SF5">
    <property type="entry name" value="METHANOL DEHYDROGENASE REGULATOR"/>
    <property type="match status" value="1"/>
</dbReference>
<dbReference type="PANTHER" id="PTHR42759">
    <property type="entry name" value="MOXR FAMILY PROTEIN"/>
    <property type="match status" value="1"/>
</dbReference>
<dbReference type="Pfam" id="PF07726">
    <property type="entry name" value="AAA_3"/>
    <property type="match status" value="1"/>
</dbReference>
<dbReference type="Pfam" id="PF17863">
    <property type="entry name" value="AAA_lid_2"/>
    <property type="match status" value="1"/>
</dbReference>
<dbReference type="PIRSF" id="PIRSF002849">
    <property type="entry name" value="AAA_ATPase_chaperone_MoxR_prd"/>
    <property type="match status" value="1"/>
</dbReference>
<dbReference type="SUPFAM" id="SSF52540">
    <property type="entry name" value="P-loop containing nucleoside triphosphate hydrolases"/>
    <property type="match status" value="1"/>
</dbReference>